<sequence length="410" mass="46681">MAAVGAEARGAWCVPCLVSLDTLQELCRKEKLTCKSIGITKRNLNNYEVEYLCDYKVVKDMEYYLVKWKGWPDSTNTWEPLQNLKCPLLLQQFSNDKHNYLSQVKKGKAITPKNNNKTLKPAIAEYIVKKAKQRIALQRWQDELNRRKNHKGMIFVENTVDLEGPPSDFYYINEYKPAPGISLVNEATFGCSCTDCFFQKCCPAEAGVLLAYNKNQQIKIPPGTPIYECNSRCQCGPDCPNRIVQKGTQYSLCIFRTSNGRGWGVKTLVKIKRMSFVMEYVGEVITSEEAERRGQFYDNKGITYLFDLDYESDEFTVDAARYGNVSHFVNHSCDPNLQVFNVFIDNLDTRLPRIALFSTRTINAGEELTFDYQMKGSGDISSDSIDHSPAKKRVRTVCKCGAVTCRGYLN</sequence>
<protein>
    <recommendedName>
        <fullName>Histone-lysine N-methyltransferase SUV39H2</fullName>
        <ecNumber>2.1.1.355</ecNumber>
    </recommendedName>
    <alternativeName>
        <fullName>Suppressor of variegation 3-9 homolog 2</fullName>
        <shortName>Su(var)3-9 homolog 2</shortName>
    </alternativeName>
</protein>
<feature type="chain" id="PRO_0000281814" description="Histone-lysine N-methyltransferase SUV39H2">
    <location>
        <begin position="1"/>
        <end position="410"/>
    </location>
</feature>
<feature type="domain" description="Chromo" evidence="3">
    <location>
        <begin position="47"/>
        <end position="105"/>
    </location>
</feature>
<feature type="domain" description="Pre-SET" evidence="5">
    <location>
        <begin position="189"/>
        <end position="247"/>
    </location>
</feature>
<feature type="domain" description="SET" evidence="6">
    <location>
        <begin position="250"/>
        <end position="373"/>
    </location>
</feature>
<feature type="domain" description="Post-SET" evidence="4">
    <location>
        <begin position="394"/>
        <end position="410"/>
    </location>
</feature>
<feature type="binding site" evidence="1">
    <location>
        <position position="191"/>
    </location>
    <ligand>
        <name>Zn(2+)</name>
        <dbReference type="ChEBI" id="CHEBI:29105"/>
        <label>1</label>
    </ligand>
</feature>
<feature type="binding site" evidence="1">
    <location>
        <position position="191"/>
    </location>
    <ligand>
        <name>Zn(2+)</name>
        <dbReference type="ChEBI" id="CHEBI:29105"/>
        <label>2</label>
    </ligand>
</feature>
<feature type="binding site" evidence="1">
    <location>
        <position position="193"/>
    </location>
    <ligand>
        <name>Zn(2+)</name>
        <dbReference type="ChEBI" id="CHEBI:29105"/>
        <label>1</label>
    </ligand>
</feature>
<feature type="binding site" evidence="1">
    <location>
        <position position="196"/>
    </location>
    <ligand>
        <name>Zn(2+)</name>
        <dbReference type="ChEBI" id="CHEBI:29105"/>
        <label>1</label>
    </ligand>
</feature>
<feature type="binding site" evidence="1">
    <location>
        <position position="196"/>
    </location>
    <ligand>
        <name>Zn(2+)</name>
        <dbReference type="ChEBI" id="CHEBI:29105"/>
        <label>3</label>
    </ligand>
</feature>
<feature type="binding site" evidence="1">
    <location>
        <position position="201"/>
    </location>
    <ligand>
        <name>Zn(2+)</name>
        <dbReference type="ChEBI" id="CHEBI:29105"/>
        <label>1</label>
    </ligand>
</feature>
<feature type="binding site" evidence="1">
    <location>
        <position position="202"/>
    </location>
    <ligand>
        <name>Zn(2+)</name>
        <dbReference type="ChEBI" id="CHEBI:29105"/>
        <label>1</label>
    </ligand>
</feature>
<feature type="binding site" evidence="1">
    <location>
        <position position="202"/>
    </location>
    <ligand>
        <name>Zn(2+)</name>
        <dbReference type="ChEBI" id="CHEBI:29105"/>
        <label>2</label>
    </ligand>
</feature>
<feature type="binding site" evidence="1">
    <location>
        <position position="229"/>
    </location>
    <ligand>
        <name>Zn(2+)</name>
        <dbReference type="ChEBI" id="CHEBI:29105"/>
        <label>2</label>
    </ligand>
</feature>
<feature type="binding site" evidence="1">
    <location>
        <position position="229"/>
    </location>
    <ligand>
        <name>Zn(2+)</name>
        <dbReference type="ChEBI" id="CHEBI:29105"/>
        <label>3</label>
    </ligand>
</feature>
<feature type="binding site" evidence="1">
    <location>
        <position position="233"/>
    </location>
    <ligand>
        <name>Zn(2+)</name>
        <dbReference type="ChEBI" id="CHEBI:29105"/>
        <label>2</label>
    </ligand>
</feature>
<feature type="binding site" evidence="1">
    <location>
        <position position="235"/>
    </location>
    <ligand>
        <name>Zn(2+)</name>
        <dbReference type="ChEBI" id="CHEBI:29105"/>
        <label>3</label>
    </ligand>
</feature>
<feature type="binding site" evidence="1">
    <location>
        <position position="239"/>
    </location>
    <ligand>
        <name>Zn(2+)</name>
        <dbReference type="ChEBI" id="CHEBI:29105"/>
        <label>3</label>
    </ligand>
</feature>
<feature type="binding site" evidence="1">
    <location>
        <begin position="261"/>
        <end position="263"/>
    </location>
    <ligand>
        <name>S-adenosyl-L-methionine</name>
        <dbReference type="ChEBI" id="CHEBI:59789"/>
    </ligand>
</feature>
<feature type="binding site" evidence="6">
    <location>
        <position position="304"/>
    </location>
    <ligand>
        <name>S-adenosyl-L-methionine</name>
        <dbReference type="ChEBI" id="CHEBI:59789"/>
    </ligand>
</feature>
<feature type="binding site" evidence="1">
    <location>
        <begin position="330"/>
        <end position="331"/>
    </location>
    <ligand>
        <name>S-adenosyl-L-methionine</name>
        <dbReference type="ChEBI" id="CHEBI:59789"/>
    </ligand>
</feature>
<feature type="binding site" evidence="1">
    <location>
        <position position="333"/>
    </location>
    <ligand>
        <name>Zn(2+)</name>
        <dbReference type="ChEBI" id="CHEBI:29105"/>
        <label>4</label>
    </ligand>
</feature>
<feature type="binding site" evidence="1">
    <location>
        <position position="398"/>
    </location>
    <ligand>
        <name>Zn(2+)</name>
        <dbReference type="ChEBI" id="CHEBI:29105"/>
        <label>4</label>
    </ligand>
</feature>
<feature type="binding site" evidence="1">
    <location>
        <position position="400"/>
    </location>
    <ligand>
        <name>Zn(2+)</name>
        <dbReference type="ChEBI" id="CHEBI:29105"/>
        <label>4</label>
    </ligand>
</feature>
<feature type="binding site" evidence="1">
    <location>
        <position position="405"/>
    </location>
    <ligand>
        <name>Zn(2+)</name>
        <dbReference type="ChEBI" id="CHEBI:29105"/>
        <label>4</label>
    </ligand>
</feature>
<feature type="modified residue" description="Phosphoserine" evidence="2">
    <location>
        <position position="381"/>
    </location>
</feature>
<feature type="modified residue" description="Phosphoserine" evidence="2">
    <location>
        <position position="384"/>
    </location>
</feature>
<feature type="modified residue" description="Phosphoserine" evidence="2">
    <location>
        <position position="388"/>
    </location>
</feature>
<accession>Q4R3E0</accession>
<name>SUV92_MACFA</name>
<comment type="function">
    <text evidence="1">Histone methyltransferase that specifically trimethylates 'Lys-9' of histone H3 using monomethylated H3 'Lys-9' as substrate. H3 'Lys-9' trimethylation represents a specific tag for epigenetic transcriptional repression by recruiting HP1 (CBX1, CBX3 and/or CBX5) proteins to methylated histones. Mainly functions in heterochromatin regions, thereby playing a central role in the establishment of constitutive heterochromatin at pericentric and telomere regions. H3 'Lys-9' trimethylation is also required to direct DNA methylation at pericentric repeats. SUV39H1 is targeted to histone H3 via its interaction with RB1 and is involved in many processes, such as cell cycle regulation, transcriptional repression and regulation of telomere length. May participate in regulation of higher-order chromatin organization during spermatogenesis. Recruited by the large PER complex to the E-box elements of the circadian target genes such as PER2 itself or PER1, contributes to the conversion of local chromatin to a heterochromatin-like repressive state through H3 'Lys-9' trimethylation (By similarity).</text>
</comment>
<comment type="catalytic activity">
    <reaction evidence="7">
        <text>L-lysyl(9)-[histone H3] + 3 S-adenosyl-L-methionine = N(6),N(6),N(6)-trimethyl-L-lysyl(9)-[histone H3] + 3 S-adenosyl-L-homocysteine + 3 H(+)</text>
        <dbReference type="Rhea" id="RHEA:60276"/>
        <dbReference type="Rhea" id="RHEA-COMP:15538"/>
        <dbReference type="Rhea" id="RHEA-COMP:15546"/>
        <dbReference type="ChEBI" id="CHEBI:15378"/>
        <dbReference type="ChEBI" id="CHEBI:29969"/>
        <dbReference type="ChEBI" id="CHEBI:57856"/>
        <dbReference type="ChEBI" id="CHEBI:59789"/>
        <dbReference type="ChEBI" id="CHEBI:61961"/>
        <dbReference type="EC" id="2.1.1.355"/>
    </reaction>
</comment>
<comment type="subunit">
    <text evidence="1">Interacts with SMAD5. The large PER complex involved in the histone methylation is composed of at least PER2, CBX3, TRIM28, SUV39H1 and/or SUV39H2; CBX3 mediates the formation of the complex (By similarity).</text>
</comment>
<comment type="subcellular location">
    <subcellularLocation>
        <location evidence="1">Nucleus</location>
    </subcellularLocation>
    <subcellularLocation>
        <location evidence="1">Chromosome</location>
        <location evidence="1">Centromere</location>
    </subcellularLocation>
    <text evidence="1">Associates with centromeric constitutive heterochromatin.</text>
</comment>
<comment type="domain">
    <text evidence="1">Although the SET domain contains the active site of enzymatic activity, both pre-SET and post-SET domains are required for methyltransferase activity. The SET domain also participates in stable binding to heterochromatin (By similarity).</text>
</comment>
<comment type="domain">
    <text evidence="1">In the pre-SET domain, Cys residues bind 3 zinc ions that are arranged in a triangular cluster; some of these Cys residues contribute to the binding of two zinc ions within the cluster.</text>
</comment>
<comment type="PTM">
    <text evidence="2">Ubiquitinated by the DCX(DCAF13) E3 ubiquitin ligase complex, leading to its degradation.</text>
</comment>
<comment type="similarity">
    <text evidence="7">Belongs to the class V-like SAM-binding methyltransferase superfamily. Histone-lysine methyltransferase family. Suvar3-9 subfamily.</text>
</comment>
<comment type="sequence caution" evidence="8">
    <conflict type="erroneous termination">
        <sequence resource="EMBL-CDS" id="BAE02377"/>
    </conflict>
    <text>Extended C-terminus.</text>
</comment>
<gene>
    <name type="primary">SUV39H2</name>
    <name type="ORF">QtsA-17663</name>
</gene>
<proteinExistence type="evidence at transcript level"/>
<evidence type="ECO:0000250" key="1"/>
<evidence type="ECO:0000250" key="2">
    <source>
        <dbReference type="UniProtKB" id="Q9H5I1"/>
    </source>
</evidence>
<evidence type="ECO:0000255" key="3">
    <source>
        <dbReference type="PROSITE-ProRule" id="PRU00053"/>
    </source>
</evidence>
<evidence type="ECO:0000255" key="4">
    <source>
        <dbReference type="PROSITE-ProRule" id="PRU00155"/>
    </source>
</evidence>
<evidence type="ECO:0000255" key="5">
    <source>
        <dbReference type="PROSITE-ProRule" id="PRU00157"/>
    </source>
</evidence>
<evidence type="ECO:0000255" key="6">
    <source>
        <dbReference type="PROSITE-ProRule" id="PRU00190"/>
    </source>
</evidence>
<evidence type="ECO:0000255" key="7">
    <source>
        <dbReference type="PROSITE-ProRule" id="PRU00912"/>
    </source>
</evidence>
<evidence type="ECO:0000305" key="8"/>
<dbReference type="EC" id="2.1.1.355"/>
<dbReference type="EMBL" id="AB179326">
    <property type="protein sequence ID" value="BAE02377.1"/>
    <property type="status" value="ALT_SEQ"/>
    <property type="molecule type" value="mRNA"/>
</dbReference>
<dbReference type="RefSeq" id="NP_001306534.1">
    <property type="nucleotide sequence ID" value="NM_001319605.1"/>
</dbReference>
<dbReference type="RefSeq" id="XP_005564732.1">
    <property type="nucleotide sequence ID" value="XM_005564675.4"/>
</dbReference>
<dbReference type="SMR" id="Q4R3E0"/>
<dbReference type="STRING" id="9541.ENSMFAP00000016665"/>
<dbReference type="Ensembl" id="ENSMFAT00000067206.2">
    <property type="protein sequence ID" value="ENSMFAP00000016671.2"/>
    <property type="gene ID" value="ENSMFAG00000031495.2"/>
</dbReference>
<dbReference type="GeneID" id="102136014"/>
<dbReference type="KEGG" id="mcf:102136014"/>
<dbReference type="CTD" id="79723"/>
<dbReference type="VEuPathDB" id="HostDB:ENSMFAG00000031495"/>
<dbReference type="eggNOG" id="KOG1082">
    <property type="taxonomic scope" value="Eukaryota"/>
</dbReference>
<dbReference type="GeneTree" id="ENSGT00940000156788"/>
<dbReference type="OrthoDB" id="3939at314294"/>
<dbReference type="Proteomes" id="UP000233100">
    <property type="component" value="Chromosome 9"/>
</dbReference>
<dbReference type="Bgee" id="ENSMFAG00000031495">
    <property type="expression patterns" value="Expressed in cerebellum and 13 other cell types or tissues"/>
</dbReference>
<dbReference type="GO" id="GO:0000785">
    <property type="term" value="C:chromatin"/>
    <property type="evidence" value="ECO:0007669"/>
    <property type="project" value="Ensembl"/>
</dbReference>
<dbReference type="GO" id="GO:0000775">
    <property type="term" value="C:chromosome, centromeric region"/>
    <property type="evidence" value="ECO:0007669"/>
    <property type="project" value="UniProtKB-SubCell"/>
</dbReference>
<dbReference type="GO" id="GO:0005634">
    <property type="term" value="C:nucleus"/>
    <property type="evidence" value="ECO:0007669"/>
    <property type="project" value="UniProtKB-SubCell"/>
</dbReference>
<dbReference type="GO" id="GO:0140949">
    <property type="term" value="F:histone H3K9 trimethyltransferase activity"/>
    <property type="evidence" value="ECO:0007669"/>
    <property type="project" value="UniProtKB-EC"/>
</dbReference>
<dbReference type="GO" id="GO:1904047">
    <property type="term" value="F:S-adenosyl-L-methionine binding"/>
    <property type="evidence" value="ECO:0007669"/>
    <property type="project" value="Ensembl"/>
</dbReference>
<dbReference type="GO" id="GO:0000976">
    <property type="term" value="F:transcription cis-regulatory region binding"/>
    <property type="evidence" value="ECO:0000250"/>
    <property type="project" value="UniProtKB"/>
</dbReference>
<dbReference type="GO" id="GO:1990756">
    <property type="term" value="F:ubiquitin-like ligase-substrate adaptor activity"/>
    <property type="evidence" value="ECO:0007669"/>
    <property type="project" value="Ensembl"/>
</dbReference>
<dbReference type="GO" id="GO:0008270">
    <property type="term" value="F:zinc ion binding"/>
    <property type="evidence" value="ECO:0007669"/>
    <property type="project" value="Ensembl"/>
</dbReference>
<dbReference type="GO" id="GO:0030154">
    <property type="term" value="P:cell differentiation"/>
    <property type="evidence" value="ECO:0007669"/>
    <property type="project" value="UniProtKB-KW"/>
</dbReference>
<dbReference type="GO" id="GO:0071456">
    <property type="term" value="P:cellular response to hypoxia"/>
    <property type="evidence" value="ECO:0007669"/>
    <property type="project" value="Ensembl"/>
</dbReference>
<dbReference type="GO" id="GO:0007623">
    <property type="term" value="P:circadian rhythm"/>
    <property type="evidence" value="ECO:0000250"/>
    <property type="project" value="UniProtKB"/>
</dbReference>
<dbReference type="GO" id="GO:0044725">
    <property type="term" value="P:epigenetic programming in the zygotic pronuclei"/>
    <property type="evidence" value="ECO:0007669"/>
    <property type="project" value="Ensembl"/>
</dbReference>
<dbReference type="GO" id="GO:0032259">
    <property type="term" value="P:methylation"/>
    <property type="evidence" value="ECO:0007669"/>
    <property type="project" value="UniProtKB-KW"/>
</dbReference>
<dbReference type="GO" id="GO:0045892">
    <property type="term" value="P:negative regulation of DNA-templated transcription"/>
    <property type="evidence" value="ECO:0000250"/>
    <property type="project" value="UniProtKB"/>
</dbReference>
<dbReference type="GO" id="GO:0045814">
    <property type="term" value="P:negative regulation of gene expression, epigenetic"/>
    <property type="evidence" value="ECO:0000250"/>
    <property type="project" value="UniProtKB"/>
</dbReference>
<dbReference type="GO" id="GO:0000122">
    <property type="term" value="P:negative regulation of transcription by RNA polymerase II"/>
    <property type="evidence" value="ECO:0007669"/>
    <property type="project" value="Ensembl"/>
</dbReference>
<dbReference type="CDD" id="cd18639">
    <property type="entry name" value="CD_SUV39H1_like"/>
    <property type="match status" value="1"/>
</dbReference>
<dbReference type="CDD" id="cd10532">
    <property type="entry name" value="SET_SUV39H2"/>
    <property type="match status" value="1"/>
</dbReference>
<dbReference type="FunFam" id="2.170.270.10:FF:000008">
    <property type="entry name" value="Histone-lysine N-methyltransferase"/>
    <property type="match status" value="1"/>
</dbReference>
<dbReference type="FunFam" id="2.40.50.40:FF:000016">
    <property type="entry name" value="Histone-lysine N-methyltransferase"/>
    <property type="match status" value="1"/>
</dbReference>
<dbReference type="Gene3D" id="2.40.50.40">
    <property type="match status" value="1"/>
</dbReference>
<dbReference type="Gene3D" id="2.170.270.10">
    <property type="entry name" value="SET domain"/>
    <property type="match status" value="1"/>
</dbReference>
<dbReference type="InterPro" id="IPR016197">
    <property type="entry name" value="Chromo-like_dom_sf"/>
</dbReference>
<dbReference type="InterPro" id="IPR000953">
    <property type="entry name" value="Chromo/chromo_shadow_dom"/>
</dbReference>
<dbReference type="InterPro" id="IPR023780">
    <property type="entry name" value="Chromo_domain"/>
</dbReference>
<dbReference type="InterPro" id="IPR023779">
    <property type="entry name" value="Chromodomain_CS"/>
</dbReference>
<dbReference type="InterPro" id="IPR011381">
    <property type="entry name" value="H3-K9_MeTrfase_SUV39H1/2-like"/>
</dbReference>
<dbReference type="InterPro" id="IPR050973">
    <property type="entry name" value="H3K9_Histone-Lys_N-MTase"/>
</dbReference>
<dbReference type="InterPro" id="IPR003616">
    <property type="entry name" value="Post-SET_dom"/>
</dbReference>
<dbReference type="InterPro" id="IPR007728">
    <property type="entry name" value="Pre-SET_dom"/>
</dbReference>
<dbReference type="InterPro" id="IPR001214">
    <property type="entry name" value="SET_dom"/>
</dbReference>
<dbReference type="InterPro" id="IPR046341">
    <property type="entry name" value="SET_dom_sf"/>
</dbReference>
<dbReference type="PANTHER" id="PTHR46223">
    <property type="entry name" value="HISTONE-LYSINE N-METHYLTRANSFERASE SUV39H"/>
    <property type="match status" value="1"/>
</dbReference>
<dbReference type="PANTHER" id="PTHR46223:SF2">
    <property type="entry name" value="HISTONE-LYSINE N-METHYLTRANSFERASE SUV39H2"/>
    <property type="match status" value="1"/>
</dbReference>
<dbReference type="Pfam" id="PF00385">
    <property type="entry name" value="Chromo"/>
    <property type="match status" value="1"/>
</dbReference>
<dbReference type="Pfam" id="PF05033">
    <property type="entry name" value="Pre-SET"/>
    <property type="match status" value="1"/>
</dbReference>
<dbReference type="Pfam" id="PF00856">
    <property type="entry name" value="SET"/>
    <property type="match status" value="1"/>
</dbReference>
<dbReference type="PIRSF" id="PIRSF009343">
    <property type="entry name" value="SUV39_SET"/>
    <property type="match status" value="1"/>
</dbReference>
<dbReference type="SMART" id="SM00298">
    <property type="entry name" value="CHROMO"/>
    <property type="match status" value="1"/>
</dbReference>
<dbReference type="SMART" id="SM00508">
    <property type="entry name" value="PostSET"/>
    <property type="match status" value="1"/>
</dbReference>
<dbReference type="SMART" id="SM00468">
    <property type="entry name" value="PreSET"/>
    <property type="match status" value="1"/>
</dbReference>
<dbReference type="SMART" id="SM00317">
    <property type="entry name" value="SET"/>
    <property type="match status" value="1"/>
</dbReference>
<dbReference type="SUPFAM" id="SSF54160">
    <property type="entry name" value="Chromo domain-like"/>
    <property type="match status" value="1"/>
</dbReference>
<dbReference type="SUPFAM" id="SSF82199">
    <property type="entry name" value="SET domain"/>
    <property type="match status" value="1"/>
</dbReference>
<dbReference type="PROSITE" id="PS00598">
    <property type="entry name" value="CHROMO_1"/>
    <property type="match status" value="1"/>
</dbReference>
<dbReference type="PROSITE" id="PS50013">
    <property type="entry name" value="CHROMO_2"/>
    <property type="match status" value="1"/>
</dbReference>
<dbReference type="PROSITE" id="PS50868">
    <property type="entry name" value="POST_SET"/>
    <property type="match status" value="1"/>
</dbReference>
<dbReference type="PROSITE" id="PS50867">
    <property type="entry name" value="PRE_SET"/>
    <property type="match status" value="1"/>
</dbReference>
<dbReference type="PROSITE" id="PS51579">
    <property type="entry name" value="SAM_MT43_SUVAR39_3"/>
    <property type="match status" value="1"/>
</dbReference>
<dbReference type="PROSITE" id="PS50280">
    <property type="entry name" value="SET"/>
    <property type="match status" value="1"/>
</dbReference>
<keyword id="KW-0090">Biological rhythms</keyword>
<keyword id="KW-0131">Cell cycle</keyword>
<keyword id="KW-0137">Centromere</keyword>
<keyword id="KW-0156">Chromatin regulator</keyword>
<keyword id="KW-0158">Chromosome</keyword>
<keyword id="KW-0221">Differentiation</keyword>
<keyword id="KW-0479">Metal-binding</keyword>
<keyword id="KW-0489">Methyltransferase</keyword>
<keyword id="KW-0539">Nucleus</keyword>
<keyword id="KW-0597">Phosphoprotein</keyword>
<keyword id="KW-1185">Reference proteome</keyword>
<keyword id="KW-0678">Repressor</keyword>
<keyword id="KW-0949">S-adenosyl-L-methionine</keyword>
<keyword id="KW-0804">Transcription</keyword>
<keyword id="KW-0805">Transcription regulation</keyword>
<keyword id="KW-0808">Transferase</keyword>
<keyword id="KW-0832">Ubl conjugation</keyword>
<keyword id="KW-0862">Zinc</keyword>
<organism>
    <name type="scientific">Macaca fascicularis</name>
    <name type="common">Crab-eating macaque</name>
    <name type="synonym">Cynomolgus monkey</name>
    <dbReference type="NCBI Taxonomy" id="9541"/>
    <lineage>
        <taxon>Eukaryota</taxon>
        <taxon>Metazoa</taxon>
        <taxon>Chordata</taxon>
        <taxon>Craniata</taxon>
        <taxon>Vertebrata</taxon>
        <taxon>Euteleostomi</taxon>
        <taxon>Mammalia</taxon>
        <taxon>Eutheria</taxon>
        <taxon>Euarchontoglires</taxon>
        <taxon>Primates</taxon>
        <taxon>Haplorrhini</taxon>
        <taxon>Catarrhini</taxon>
        <taxon>Cercopithecidae</taxon>
        <taxon>Cercopithecinae</taxon>
        <taxon>Macaca</taxon>
    </lineage>
</organism>
<reference key="1">
    <citation type="submission" date="2005-06" db="EMBL/GenBank/DDBJ databases">
        <title>DNA sequences of macaque genes expressed in brain or testis and its evolutionary implications.</title>
        <authorList>
            <consortium name="International consortium for macaque cDNA sequencing and analysis"/>
        </authorList>
    </citation>
    <scope>NUCLEOTIDE SEQUENCE [LARGE SCALE MRNA]</scope>
    <source>
        <tissue>Testis</tissue>
    </source>
</reference>